<organism>
    <name type="scientific">Salmonella typhi</name>
    <dbReference type="NCBI Taxonomy" id="90370"/>
    <lineage>
        <taxon>Bacteria</taxon>
        <taxon>Pseudomonadati</taxon>
        <taxon>Pseudomonadota</taxon>
        <taxon>Gammaproteobacteria</taxon>
        <taxon>Enterobacterales</taxon>
        <taxon>Enterobacteriaceae</taxon>
        <taxon>Salmonella</taxon>
    </lineage>
</organism>
<sequence>MHENQQPQTEAFELSAAEREAIEHEKHHYEDPRAASIEALKIVQKQRGWVPDGAIYAIADVLGIPASDVEGVATFYSQIFRQPVGRHVIRYCDSVVCHITGYQGIQAALEKNLNIKPGQTTFDGRFTLLPTCCLGNCDKGPNMMIDEDTHSHLTPEAIPELLERYK</sequence>
<protein>
    <recommendedName>
        <fullName>NADH-quinone oxidoreductase subunit E</fullName>
        <ecNumber>7.1.1.-</ecNumber>
    </recommendedName>
    <alternativeName>
        <fullName>NADH dehydrogenase I subunit E</fullName>
    </alternativeName>
    <alternativeName>
        <fullName>NDH-1 subunit E</fullName>
    </alternativeName>
</protein>
<proteinExistence type="inferred from homology"/>
<evidence type="ECO:0000250" key="1"/>
<evidence type="ECO:0000255" key="2"/>
<evidence type="ECO:0000305" key="3"/>
<comment type="function">
    <text evidence="1">NDH-1 shuttles electrons from NADH, via FMN and iron-sulfur (Fe-S) centers, to quinones in the respiratory chain. The immediate electron acceptor for the enzyme in this species is believed to be ubiquinone. Couples the redox reaction to proton translocation (for every two electrons transferred, four hydrogen ions are translocated across the cytoplasmic membrane), and thus conserves the redox energy in a proton gradient (By similarity).</text>
</comment>
<comment type="catalytic activity">
    <reaction>
        <text>a quinone + NADH + 5 H(+)(in) = a quinol + NAD(+) + 4 H(+)(out)</text>
        <dbReference type="Rhea" id="RHEA:57888"/>
        <dbReference type="ChEBI" id="CHEBI:15378"/>
        <dbReference type="ChEBI" id="CHEBI:24646"/>
        <dbReference type="ChEBI" id="CHEBI:57540"/>
        <dbReference type="ChEBI" id="CHEBI:57945"/>
        <dbReference type="ChEBI" id="CHEBI:132124"/>
    </reaction>
</comment>
<comment type="cofactor">
    <cofactor evidence="3">
        <name>[2Fe-2S] cluster</name>
        <dbReference type="ChEBI" id="CHEBI:190135"/>
    </cofactor>
    <text evidence="3">Binds 1 [2Fe-2S] cluster.</text>
</comment>
<comment type="subunit">
    <text evidence="1">Composed of 13 different subunits. Subunits NuoCD, E, F, and G constitute the peripheral sector of the complex (By similarity).</text>
</comment>
<comment type="similarity">
    <text evidence="3">Belongs to the complex I 24 kDa subunit family.</text>
</comment>
<dbReference type="EC" id="7.1.1.-"/>
<dbReference type="EMBL" id="AL513382">
    <property type="protein sequence ID" value="CAD07557.1"/>
    <property type="molecule type" value="Genomic_DNA"/>
</dbReference>
<dbReference type="EMBL" id="AE014613">
    <property type="protein sequence ID" value="AAO68245.1"/>
    <property type="molecule type" value="Genomic_DNA"/>
</dbReference>
<dbReference type="RefSeq" id="NP_456867.1">
    <property type="nucleotide sequence ID" value="NC_003198.1"/>
</dbReference>
<dbReference type="RefSeq" id="WP_000545038.1">
    <property type="nucleotide sequence ID" value="NZ_WSUR01000029.1"/>
</dbReference>
<dbReference type="SMR" id="P0A1Y9"/>
<dbReference type="STRING" id="220341.gene:17586454"/>
<dbReference type="KEGG" id="stt:t0539"/>
<dbReference type="KEGG" id="sty:STY2555"/>
<dbReference type="PATRIC" id="fig|220341.7.peg.2585"/>
<dbReference type="eggNOG" id="COG1905">
    <property type="taxonomic scope" value="Bacteria"/>
</dbReference>
<dbReference type="HOGENOM" id="CLU_054362_2_0_6"/>
<dbReference type="OMA" id="HIIRYCD"/>
<dbReference type="OrthoDB" id="9807941at2"/>
<dbReference type="Proteomes" id="UP000000541">
    <property type="component" value="Chromosome"/>
</dbReference>
<dbReference type="Proteomes" id="UP000002670">
    <property type="component" value="Chromosome"/>
</dbReference>
<dbReference type="GO" id="GO:0051537">
    <property type="term" value="F:2 iron, 2 sulfur cluster binding"/>
    <property type="evidence" value="ECO:0007669"/>
    <property type="project" value="UniProtKB-KW"/>
</dbReference>
<dbReference type="GO" id="GO:0046872">
    <property type="term" value="F:metal ion binding"/>
    <property type="evidence" value="ECO:0007669"/>
    <property type="project" value="UniProtKB-KW"/>
</dbReference>
<dbReference type="GO" id="GO:0003954">
    <property type="term" value="F:NADH dehydrogenase activity"/>
    <property type="evidence" value="ECO:0007669"/>
    <property type="project" value="TreeGrafter"/>
</dbReference>
<dbReference type="GO" id="GO:0048038">
    <property type="term" value="F:quinone binding"/>
    <property type="evidence" value="ECO:0007669"/>
    <property type="project" value="UniProtKB-KW"/>
</dbReference>
<dbReference type="CDD" id="cd03064">
    <property type="entry name" value="TRX_Fd_NuoE"/>
    <property type="match status" value="1"/>
</dbReference>
<dbReference type="FunFam" id="1.10.10.1590:FF:000001">
    <property type="entry name" value="NADH-quinone oxidoreductase subunit E"/>
    <property type="match status" value="1"/>
</dbReference>
<dbReference type="FunFam" id="3.40.30.10:FF:000015">
    <property type="entry name" value="NADH-quinone oxidoreductase subunit E"/>
    <property type="match status" value="1"/>
</dbReference>
<dbReference type="Gene3D" id="3.40.30.10">
    <property type="entry name" value="Glutaredoxin"/>
    <property type="match status" value="1"/>
</dbReference>
<dbReference type="Gene3D" id="1.10.10.1590">
    <property type="entry name" value="NADH-quinone oxidoreductase subunit E"/>
    <property type="match status" value="1"/>
</dbReference>
<dbReference type="InterPro" id="IPR002023">
    <property type="entry name" value="NuoE-like"/>
</dbReference>
<dbReference type="InterPro" id="IPR042128">
    <property type="entry name" value="NuoE_dom"/>
</dbReference>
<dbReference type="InterPro" id="IPR041921">
    <property type="entry name" value="NuoE_N"/>
</dbReference>
<dbReference type="InterPro" id="IPR036249">
    <property type="entry name" value="Thioredoxin-like_sf"/>
</dbReference>
<dbReference type="NCBIfam" id="TIGR01958">
    <property type="entry name" value="nuoE_fam"/>
    <property type="match status" value="1"/>
</dbReference>
<dbReference type="NCBIfam" id="NF005722">
    <property type="entry name" value="PRK07539.1-2"/>
    <property type="match status" value="1"/>
</dbReference>
<dbReference type="PANTHER" id="PTHR10371:SF3">
    <property type="entry name" value="NADH DEHYDROGENASE [UBIQUINONE] FLAVOPROTEIN 2, MITOCHONDRIAL"/>
    <property type="match status" value="1"/>
</dbReference>
<dbReference type="PANTHER" id="PTHR10371">
    <property type="entry name" value="NADH DEHYDROGENASE UBIQUINONE FLAVOPROTEIN 2, MITOCHONDRIAL"/>
    <property type="match status" value="1"/>
</dbReference>
<dbReference type="Pfam" id="PF01257">
    <property type="entry name" value="2Fe-2S_thioredx"/>
    <property type="match status" value="1"/>
</dbReference>
<dbReference type="PIRSF" id="PIRSF000216">
    <property type="entry name" value="NADH_DH_24kDa"/>
    <property type="match status" value="1"/>
</dbReference>
<dbReference type="SUPFAM" id="SSF52833">
    <property type="entry name" value="Thioredoxin-like"/>
    <property type="match status" value="1"/>
</dbReference>
<dbReference type="PROSITE" id="PS01099">
    <property type="entry name" value="COMPLEX1_24K"/>
    <property type="match status" value="1"/>
</dbReference>
<accession>P0A1Y9</accession>
<accession>P33903</accession>
<name>NUOE_SALTI</name>
<feature type="chain" id="PRO_0000118693" description="NADH-quinone oxidoreductase subunit E">
    <location>
        <begin position="1"/>
        <end position="166"/>
    </location>
</feature>
<feature type="binding site" evidence="2">
    <location>
        <position position="92"/>
    </location>
    <ligand>
        <name>[2Fe-2S] cluster</name>
        <dbReference type="ChEBI" id="CHEBI:190135"/>
    </ligand>
</feature>
<feature type="binding site" evidence="2">
    <location>
        <position position="97"/>
    </location>
    <ligand>
        <name>[2Fe-2S] cluster</name>
        <dbReference type="ChEBI" id="CHEBI:190135"/>
    </ligand>
</feature>
<feature type="binding site" evidence="2">
    <location>
        <position position="133"/>
    </location>
    <ligand>
        <name>[2Fe-2S] cluster</name>
        <dbReference type="ChEBI" id="CHEBI:190135"/>
    </ligand>
</feature>
<feature type="binding site" evidence="2">
    <location>
        <position position="137"/>
    </location>
    <ligand>
        <name>[2Fe-2S] cluster</name>
        <dbReference type="ChEBI" id="CHEBI:190135"/>
    </ligand>
</feature>
<gene>
    <name type="primary">nuoE</name>
    <name type="ordered locus">STY2555</name>
    <name type="ordered locus">t0539</name>
</gene>
<reference key="1">
    <citation type="journal article" date="2001" name="Nature">
        <title>Complete genome sequence of a multiple drug resistant Salmonella enterica serovar Typhi CT18.</title>
        <authorList>
            <person name="Parkhill J."/>
            <person name="Dougan G."/>
            <person name="James K.D."/>
            <person name="Thomson N.R."/>
            <person name="Pickard D."/>
            <person name="Wain J."/>
            <person name="Churcher C.M."/>
            <person name="Mungall K.L."/>
            <person name="Bentley S.D."/>
            <person name="Holden M.T.G."/>
            <person name="Sebaihia M."/>
            <person name="Baker S."/>
            <person name="Basham D."/>
            <person name="Brooks K."/>
            <person name="Chillingworth T."/>
            <person name="Connerton P."/>
            <person name="Cronin A."/>
            <person name="Davis P."/>
            <person name="Davies R.M."/>
            <person name="Dowd L."/>
            <person name="White N."/>
            <person name="Farrar J."/>
            <person name="Feltwell T."/>
            <person name="Hamlin N."/>
            <person name="Haque A."/>
            <person name="Hien T.T."/>
            <person name="Holroyd S."/>
            <person name="Jagels K."/>
            <person name="Krogh A."/>
            <person name="Larsen T.S."/>
            <person name="Leather S."/>
            <person name="Moule S."/>
            <person name="O'Gaora P."/>
            <person name="Parry C."/>
            <person name="Quail M.A."/>
            <person name="Rutherford K.M."/>
            <person name="Simmonds M."/>
            <person name="Skelton J."/>
            <person name="Stevens K."/>
            <person name="Whitehead S."/>
            <person name="Barrell B.G."/>
        </authorList>
    </citation>
    <scope>NUCLEOTIDE SEQUENCE [LARGE SCALE GENOMIC DNA]</scope>
    <source>
        <strain>CT18</strain>
    </source>
</reference>
<reference key="2">
    <citation type="journal article" date="2003" name="J. Bacteriol.">
        <title>Comparative genomics of Salmonella enterica serovar Typhi strains Ty2 and CT18.</title>
        <authorList>
            <person name="Deng W."/>
            <person name="Liou S.-R."/>
            <person name="Plunkett G. III"/>
            <person name="Mayhew G.F."/>
            <person name="Rose D.J."/>
            <person name="Burland V."/>
            <person name="Kodoyianni V."/>
            <person name="Schwartz D.C."/>
            <person name="Blattner F.R."/>
        </authorList>
    </citation>
    <scope>NUCLEOTIDE SEQUENCE [LARGE SCALE GENOMIC DNA]</scope>
    <source>
        <strain>ATCC 700931 / Ty2</strain>
    </source>
</reference>
<keyword id="KW-0001">2Fe-2S</keyword>
<keyword id="KW-0408">Iron</keyword>
<keyword id="KW-0411">Iron-sulfur</keyword>
<keyword id="KW-0479">Metal-binding</keyword>
<keyword id="KW-0520">NAD</keyword>
<keyword id="KW-0874">Quinone</keyword>
<keyword id="KW-1278">Translocase</keyword>
<keyword id="KW-0830">Ubiquinone</keyword>